<sequence>METPNQDSGRTPTEQSAANDLSVADRQVNILRDKLRHIDRQLAAATQNNTKLVSMLETAKAEILRLKNALDQEGQPPYSFGTILQLNPRRQPAPGNSGQAATEESADIFNAGRKMRVGLSPLVNINQLTVGQEVLLNEALLIVAGLGYERAGELATLKEMLGADRALVVGRADEERVVRLSGALLAQKLRVGDALSIDSRTGYALEKVPRSEVENLVLEEVPDITYEDIGGLGPQIEQIRDAVELPFLHPDLYREHGLKAPKGILLYGPPGCGKTLIAKAVANSLAARAAERSGNVDLKSYFLNIKGPELLDKYVGETERHIRLIFARAREKASDGSPVVVFFDEMDSLFRTRGTGISSDVETTIVPQLLSEIDGVERLDNVIVIGASNREDMIDPAILRPGRLDVKVKIHRPDAEAAADIFNKYITPDLPFHESDLAEHNGDVQATVDAMVQRTVEAMYSTDKSNEFLEVTYANGDTEMLYFKDFNSGAVVQNVVDRAKKYAIKDLLTSQQRGLRIEHLLRAVVDEFREHEDMPNTTNPDDWARISGKKGERITYIRTIVQGKAGQEPGKSIETTPTTGQYL</sequence>
<dbReference type="EMBL" id="CP001341">
    <property type="protein sequence ID" value="ACL39891.1"/>
    <property type="molecule type" value="Genomic_DNA"/>
</dbReference>
<dbReference type="RefSeq" id="WP_015937111.1">
    <property type="nucleotide sequence ID" value="NC_011886.1"/>
</dbReference>
<dbReference type="SMR" id="B8H8L3"/>
<dbReference type="STRING" id="452863.Achl_1916"/>
<dbReference type="KEGG" id="ach:Achl_1916"/>
<dbReference type="eggNOG" id="COG1222">
    <property type="taxonomic scope" value="Bacteria"/>
</dbReference>
<dbReference type="HOGENOM" id="CLU_036054_0_0_11"/>
<dbReference type="OrthoDB" id="9809379at2"/>
<dbReference type="UniPathway" id="UPA00997"/>
<dbReference type="Proteomes" id="UP000002505">
    <property type="component" value="Chromosome"/>
</dbReference>
<dbReference type="GO" id="GO:0000502">
    <property type="term" value="C:proteasome complex"/>
    <property type="evidence" value="ECO:0007669"/>
    <property type="project" value="UniProtKB-KW"/>
</dbReference>
<dbReference type="GO" id="GO:0005524">
    <property type="term" value="F:ATP binding"/>
    <property type="evidence" value="ECO:0007669"/>
    <property type="project" value="UniProtKB-UniRule"/>
</dbReference>
<dbReference type="GO" id="GO:0016887">
    <property type="term" value="F:ATP hydrolysis activity"/>
    <property type="evidence" value="ECO:0007669"/>
    <property type="project" value="UniProtKB-UniRule"/>
</dbReference>
<dbReference type="GO" id="GO:0019941">
    <property type="term" value="P:modification-dependent protein catabolic process"/>
    <property type="evidence" value="ECO:0007669"/>
    <property type="project" value="InterPro"/>
</dbReference>
<dbReference type="GO" id="GO:0010498">
    <property type="term" value="P:proteasomal protein catabolic process"/>
    <property type="evidence" value="ECO:0007669"/>
    <property type="project" value="InterPro"/>
</dbReference>
<dbReference type="FunFam" id="3.40.50.300:FF:001025">
    <property type="entry name" value="ATPase family, AAA domain-containing 2B"/>
    <property type="match status" value="1"/>
</dbReference>
<dbReference type="Gene3D" id="1.10.8.60">
    <property type="match status" value="1"/>
</dbReference>
<dbReference type="Gene3D" id="1.20.5.170">
    <property type="match status" value="1"/>
</dbReference>
<dbReference type="Gene3D" id="2.40.50.140">
    <property type="entry name" value="Nucleic acid-binding proteins"/>
    <property type="match status" value="2"/>
</dbReference>
<dbReference type="Gene3D" id="3.40.50.300">
    <property type="entry name" value="P-loop containing nucleotide triphosphate hydrolases"/>
    <property type="match status" value="1"/>
</dbReference>
<dbReference type="HAMAP" id="MF_02112">
    <property type="entry name" value="ARC_ATPase"/>
    <property type="match status" value="1"/>
</dbReference>
<dbReference type="InterPro" id="IPR003593">
    <property type="entry name" value="AAA+_ATPase"/>
</dbReference>
<dbReference type="InterPro" id="IPR050168">
    <property type="entry name" value="AAA_ATPase_domain"/>
</dbReference>
<dbReference type="InterPro" id="IPR003959">
    <property type="entry name" value="ATPase_AAA_core"/>
</dbReference>
<dbReference type="InterPro" id="IPR003960">
    <property type="entry name" value="ATPase_AAA_CS"/>
</dbReference>
<dbReference type="InterPro" id="IPR012340">
    <property type="entry name" value="NA-bd_OB-fold"/>
</dbReference>
<dbReference type="InterPro" id="IPR027417">
    <property type="entry name" value="P-loop_NTPase"/>
</dbReference>
<dbReference type="InterPro" id="IPR032501">
    <property type="entry name" value="Prot_ATP_ID_OB_2nd"/>
</dbReference>
<dbReference type="InterPro" id="IPR041626">
    <property type="entry name" value="Prot_ATP_ID_OB_N"/>
</dbReference>
<dbReference type="InterPro" id="IPR022482">
    <property type="entry name" value="Proteasome_ATPase"/>
</dbReference>
<dbReference type="NCBIfam" id="TIGR03689">
    <property type="entry name" value="pup_AAA"/>
    <property type="match status" value="1"/>
</dbReference>
<dbReference type="PANTHER" id="PTHR23077">
    <property type="entry name" value="AAA-FAMILY ATPASE"/>
    <property type="match status" value="1"/>
</dbReference>
<dbReference type="PANTHER" id="PTHR23077:SF144">
    <property type="entry name" value="PROTEASOME-ASSOCIATED ATPASE"/>
    <property type="match status" value="1"/>
</dbReference>
<dbReference type="Pfam" id="PF00004">
    <property type="entry name" value="AAA"/>
    <property type="match status" value="1"/>
</dbReference>
<dbReference type="Pfam" id="PF16450">
    <property type="entry name" value="Prot_ATP_ID_OB_C"/>
    <property type="match status" value="1"/>
</dbReference>
<dbReference type="Pfam" id="PF17758">
    <property type="entry name" value="Prot_ATP_ID_OB_N"/>
    <property type="match status" value="1"/>
</dbReference>
<dbReference type="SMART" id="SM00382">
    <property type="entry name" value="AAA"/>
    <property type="match status" value="1"/>
</dbReference>
<dbReference type="SUPFAM" id="SSF52540">
    <property type="entry name" value="P-loop containing nucleoside triphosphate hydrolases"/>
    <property type="match status" value="1"/>
</dbReference>
<dbReference type="PROSITE" id="PS00674">
    <property type="entry name" value="AAA"/>
    <property type="match status" value="1"/>
</dbReference>
<accession>B8H8L3</accession>
<comment type="function">
    <text evidence="1">ATPase which is responsible for recognizing, binding, unfolding and translocation of pupylated proteins into the bacterial 20S proteasome core particle. May be essential for opening the gate of the 20S proteasome via an interaction with its C-terminus, thereby allowing substrate entry and access to the site of proteolysis. Thus, the C-termini of the proteasomal ATPase may function like a 'key in a lock' to induce gate opening and therefore regulate proteolysis.</text>
</comment>
<comment type="pathway">
    <text evidence="1">Protein degradation; proteasomal Pup-dependent pathway.</text>
</comment>
<comment type="subunit">
    <text evidence="1">Homohexamer. Assembles into a hexameric ring structure that caps the 20S proteasome core. Strongly interacts with the prokaryotic ubiquitin-like protein Pup through a hydrophobic interface; the interacting region of ARC lies in its N-terminal coiled-coil domain. There is one Pup binding site per ARC hexamer ring. Upon ATP-binding, the C-terminus of ARC interacts with the alpha-rings of the proteasome core, possibly by binding to the intersubunit pockets.</text>
</comment>
<comment type="domain">
    <text evidence="1">Consists of three main regions, an N-terminal coiled-coil domain that binds to protein Pup and functions as a docking station, an interdomain involved in ARC hexamerization, and a C-terminal ATPase domain of the AAA type.</text>
</comment>
<comment type="similarity">
    <text evidence="1">Belongs to the AAA ATPase family.</text>
</comment>
<protein>
    <recommendedName>
        <fullName evidence="1">Proteasome-associated ATPase</fullName>
    </recommendedName>
    <alternativeName>
        <fullName evidence="1">AAA ATPase forming ring-shaped complexes</fullName>
        <shortName evidence="1">ARC</shortName>
    </alternativeName>
    <alternativeName>
        <fullName evidence="1">Proteasomal ATPase</fullName>
    </alternativeName>
</protein>
<gene>
    <name evidence="1" type="primary">arc</name>
    <name type="ordered locus">Achl_1916</name>
</gene>
<evidence type="ECO:0000255" key="1">
    <source>
        <dbReference type="HAMAP-Rule" id="MF_02112"/>
    </source>
</evidence>
<evidence type="ECO:0000256" key="2">
    <source>
        <dbReference type="SAM" id="MobiDB-lite"/>
    </source>
</evidence>
<keyword id="KW-0067">ATP-binding</keyword>
<keyword id="KW-0143">Chaperone</keyword>
<keyword id="KW-0175">Coiled coil</keyword>
<keyword id="KW-0547">Nucleotide-binding</keyword>
<keyword id="KW-0647">Proteasome</keyword>
<name>ARC_PSECP</name>
<feature type="chain" id="PRO_0000396960" description="Proteasome-associated ATPase">
    <location>
        <begin position="1"/>
        <end position="583"/>
    </location>
</feature>
<feature type="region of interest" description="Disordered" evidence="2">
    <location>
        <begin position="1"/>
        <end position="22"/>
    </location>
</feature>
<feature type="region of interest" description="Docks into pockets in the proteasome alpha-ring" evidence="1">
    <location>
        <begin position="582"/>
        <end position="583"/>
    </location>
</feature>
<feature type="coiled-coil region" evidence="1">
    <location>
        <begin position="24"/>
        <end position="75"/>
    </location>
</feature>
<feature type="compositionally biased region" description="Polar residues" evidence="2">
    <location>
        <begin position="1"/>
        <end position="19"/>
    </location>
</feature>
<feature type="binding site" evidence="1">
    <location>
        <begin position="271"/>
        <end position="276"/>
    </location>
    <ligand>
        <name>ATP</name>
        <dbReference type="ChEBI" id="CHEBI:30616"/>
    </ligand>
</feature>
<reference key="1">
    <citation type="submission" date="2009-01" db="EMBL/GenBank/DDBJ databases">
        <title>Complete sequence of chromosome of Arthrobacter chlorophenolicus A6.</title>
        <authorList>
            <consortium name="US DOE Joint Genome Institute"/>
            <person name="Lucas S."/>
            <person name="Copeland A."/>
            <person name="Lapidus A."/>
            <person name="Glavina del Rio T."/>
            <person name="Tice H."/>
            <person name="Bruce D."/>
            <person name="Goodwin L."/>
            <person name="Pitluck S."/>
            <person name="Goltsman E."/>
            <person name="Clum A."/>
            <person name="Larimer F."/>
            <person name="Land M."/>
            <person name="Hauser L."/>
            <person name="Kyrpides N."/>
            <person name="Mikhailova N."/>
            <person name="Jansson J."/>
            <person name="Richardson P."/>
        </authorList>
    </citation>
    <scope>NUCLEOTIDE SEQUENCE [LARGE SCALE GENOMIC DNA]</scope>
    <source>
        <strain>ATCC 700700 / DSM 12829 / CIP 107037 / JCM 12360 / KCTC 9906 / NCIMB 13794 / A6</strain>
    </source>
</reference>
<proteinExistence type="inferred from homology"/>
<organism>
    <name type="scientific">Pseudarthrobacter chlorophenolicus (strain ATCC 700700 / DSM 12829 / CIP 107037 / JCM 12360 / KCTC 9906 / NCIMB 13794 / A6)</name>
    <name type="common">Arthrobacter chlorophenolicus</name>
    <dbReference type="NCBI Taxonomy" id="452863"/>
    <lineage>
        <taxon>Bacteria</taxon>
        <taxon>Bacillati</taxon>
        <taxon>Actinomycetota</taxon>
        <taxon>Actinomycetes</taxon>
        <taxon>Micrococcales</taxon>
        <taxon>Micrococcaceae</taxon>
        <taxon>Pseudarthrobacter</taxon>
    </lineage>
</organism>